<reference key="1">
    <citation type="journal article" date="2009" name="J. Bacteriol.">
        <title>Complete genome sequence of Erythrobacter litoralis HTCC2594.</title>
        <authorList>
            <person name="Oh H.M."/>
            <person name="Giovannoni S.J."/>
            <person name="Ferriera S."/>
            <person name="Johnson J."/>
            <person name="Cho J.C."/>
        </authorList>
    </citation>
    <scope>NUCLEOTIDE SEQUENCE [LARGE SCALE GENOMIC DNA]</scope>
    <source>
        <strain>HTCC2594</strain>
    </source>
</reference>
<proteinExistence type="inferred from homology"/>
<sequence length="207" mass="22845">MIATEEQARAFVAERCDAAGMERIEALVAALRSENERQNLVSKGSLGEVWQRHIADSAQLLDHVSRETGLWLDLGSGAGFPGLVVAAMQPEKPVLLVESRRKRVEWLTDMVKALKLENCDVAGMRLELLEAREAGVISARAFAPLEKLLRLSARFSTDTTTWVLPKGRSAAQELQGVSRKWQKLFHVEQSVTSEEAAILVGRGRAKT</sequence>
<comment type="function">
    <text evidence="1">Specifically methylates the N7 position of guanine in position 527 of 16S rRNA.</text>
</comment>
<comment type="catalytic activity">
    <reaction evidence="1">
        <text>guanosine(527) in 16S rRNA + S-adenosyl-L-methionine = N(7)-methylguanosine(527) in 16S rRNA + S-adenosyl-L-homocysteine</text>
        <dbReference type="Rhea" id="RHEA:42732"/>
        <dbReference type="Rhea" id="RHEA-COMP:10209"/>
        <dbReference type="Rhea" id="RHEA-COMP:10210"/>
        <dbReference type="ChEBI" id="CHEBI:57856"/>
        <dbReference type="ChEBI" id="CHEBI:59789"/>
        <dbReference type="ChEBI" id="CHEBI:74269"/>
        <dbReference type="ChEBI" id="CHEBI:74480"/>
        <dbReference type="EC" id="2.1.1.170"/>
    </reaction>
</comment>
<comment type="subcellular location">
    <subcellularLocation>
        <location evidence="1">Cytoplasm</location>
    </subcellularLocation>
</comment>
<comment type="similarity">
    <text evidence="1">Belongs to the methyltransferase superfamily. RNA methyltransferase RsmG family.</text>
</comment>
<keyword id="KW-0963">Cytoplasm</keyword>
<keyword id="KW-0489">Methyltransferase</keyword>
<keyword id="KW-1185">Reference proteome</keyword>
<keyword id="KW-0698">rRNA processing</keyword>
<keyword id="KW-0949">S-adenosyl-L-methionine</keyword>
<keyword id="KW-0808">Transferase</keyword>
<feature type="chain" id="PRO_1000010144" description="Ribosomal RNA small subunit methyltransferase G">
    <location>
        <begin position="1"/>
        <end position="207"/>
    </location>
</feature>
<feature type="binding site" evidence="1">
    <location>
        <position position="75"/>
    </location>
    <ligand>
        <name>S-adenosyl-L-methionine</name>
        <dbReference type="ChEBI" id="CHEBI:59789"/>
    </ligand>
</feature>
<feature type="binding site" evidence="1">
    <location>
        <position position="80"/>
    </location>
    <ligand>
        <name>S-adenosyl-L-methionine</name>
        <dbReference type="ChEBI" id="CHEBI:59789"/>
    </ligand>
</feature>
<feature type="binding site" evidence="1">
    <location>
        <begin position="126"/>
        <end position="127"/>
    </location>
    <ligand>
        <name>S-adenosyl-L-methionine</name>
        <dbReference type="ChEBI" id="CHEBI:59789"/>
    </ligand>
</feature>
<feature type="binding site" evidence="1">
    <location>
        <position position="140"/>
    </location>
    <ligand>
        <name>S-adenosyl-L-methionine</name>
        <dbReference type="ChEBI" id="CHEBI:59789"/>
    </ligand>
</feature>
<name>RSMG_ERYLH</name>
<protein>
    <recommendedName>
        <fullName evidence="1">Ribosomal RNA small subunit methyltransferase G</fullName>
        <ecNumber evidence="1">2.1.1.170</ecNumber>
    </recommendedName>
    <alternativeName>
        <fullName evidence="1">16S rRNA 7-methylguanosine methyltransferase</fullName>
        <shortName evidence="1">16S rRNA m7G methyltransferase</shortName>
    </alternativeName>
</protein>
<gene>
    <name evidence="1" type="primary">rsmG</name>
    <name type="ordered locus">ELI_13060</name>
</gene>
<evidence type="ECO:0000255" key="1">
    <source>
        <dbReference type="HAMAP-Rule" id="MF_00074"/>
    </source>
</evidence>
<organism>
    <name type="scientific">Erythrobacter litoralis (strain HTCC2594)</name>
    <dbReference type="NCBI Taxonomy" id="314225"/>
    <lineage>
        <taxon>Bacteria</taxon>
        <taxon>Pseudomonadati</taxon>
        <taxon>Pseudomonadota</taxon>
        <taxon>Alphaproteobacteria</taxon>
        <taxon>Sphingomonadales</taxon>
        <taxon>Erythrobacteraceae</taxon>
        <taxon>Erythrobacter/Porphyrobacter group</taxon>
        <taxon>Erythrobacter</taxon>
    </lineage>
</organism>
<dbReference type="EC" id="2.1.1.170" evidence="1"/>
<dbReference type="EMBL" id="CP000157">
    <property type="protein sequence ID" value="ABC64704.1"/>
    <property type="molecule type" value="Genomic_DNA"/>
</dbReference>
<dbReference type="RefSeq" id="WP_011415526.1">
    <property type="nucleotide sequence ID" value="NC_007722.1"/>
</dbReference>
<dbReference type="SMR" id="Q2N6I7"/>
<dbReference type="STRING" id="314225.ELI_13060"/>
<dbReference type="KEGG" id="eli:ELI_13060"/>
<dbReference type="eggNOG" id="COG0357">
    <property type="taxonomic scope" value="Bacteria"/>
</dbReference>
<dbReference type="HOGENOM" id="CLU_065341_1_1_5"/>
<dbReference type="OrthoDB" id="9808773at2"/>
<dbReference type="Proteomes" id="UP000008808">
    <property type="component" value="Chromosome"/>
</dbReference>
<dbReference type="GO" id="GO:0005829">
    <property type="term" value="C:cytosol"/>
    <property type="evidence" value="ECO:0007669"/>
    <property type="project" value="TreeGrafter"/>
</dbReference>
<dbReference type="GO" id="GO:0070043">
    <property type="term" value="F:rRNA (guanine-N7-)-methyltransferase activity"/>
    <property type="evidence" value="ECO:0007669"/>
    <property type="project" value="UniProtKB-UniRule"/>
</dbReference>
<dbReference type="Gene3D" id="3.40.50.150">
    <property type="entry name" value="Vaccinia Virus protein VP39"/>
    <property type="match status" value="1"/>
</dbReference>
<dbReference type="HAMAP" id="MF_00074">
    <property type="entry name" value="16SrRNA_methyltr_G"/>
    <property type="match status" value="1"/>
</dbReference>
<dbReference type="InterPro" id="IPR003682">
    <property type="entry name" value="rRNA_ssu_MeTfrase_G"/>
</dbReference>
<dbReference type="InterPro" id="IPR029063">
    <property type="entry name" value="SAM-dependent_MTases_sf"/>
</dbReference>
<dbReference type="NCBIfam" id="TIGR00138">
    <property type="entry name" value="rsmG_gidB"/>
    <property type="match status" value="1"/>
</dbReference>
<dbReference type="PANTHER" id="PTHR31760">
    <property type="entry name" value="S-ADENOSYL-L-METHIONINE-DEPENDENT METHYLTRANSFERASES SUPERFAMILY PROTEIN"/>
    <property type="match status" value="1"/>
</dbReference>
<dbReference type="PANTHER" id="PTHR31760:SF0">
    <property type="entry name" value="S-ADENOSYL-L-METHIONINE-DEPENDENT METHYLTRANSFERASES SUPERFAMILY PROTEIN"/>
    <property type="match status" value="1"/>
</dbReference>
<dbReference type="Pfam" id="PF02527">
    <property type="entry name" value="GidB"/>
    <property type="match status" value="1"/>
</dbReference>
<dbReference type="PIRSF" id="PIRSF003078">
    <property type="entry name" value="GidB"/>
    <property type="match status" value="1"/>
</dbReference>
<dbReference type="SUPFAM" id="SSF53335">
    <property type="entry name" value="S-adenosyl-L-methionine-dependent methyltransferases"/>
    <property type="match status" value="1"/>
</dbReference>
<accession>Q2N6I7</accession>